<dbReference type="EC" id="1.9.6.1" evidence="1"/>
<dbReference type="EMBL" id="AE005174">
    <property type="protein sequence ID" value="AAG57341.1"/>
    <property type="molecule type" value="Genomic_DNA"/>
</dbReference>
<dbReference type="EMBL" id="BA000007">
    <property type="protein sequence ID" value="BAB36518.1"/>
    <property type="molecule type" value="Genomic_DNA"/>
</dbReference>
<dbReference type="PIR" id="A85860">
    <property type="entry name" value="A85860"/>
</dbReference>
<dbReference type="PIR" id="G91015">
    <property type="entry name" value="G91015"/>
</dbReference>
<dbReference type="RefSeq" id="NP_311122.1">
    <property type="nucleotide sequence ID" value="NC_002695.1"/>
</dbReference>
<dbReference type="RefSeq" id="WP_000778047.1">
    <property type="nucleotide sequence ID" value="NZ_VOAI01000001.1"/>
</dbReference>
<dbReference type="SMR" id="Q8XE47"/>
<dbReference type="STRING" id="155864.Z3463"/>
<dbReference type="GeneID" id="916801"/>
<dbReference type="KEGG" id="ece:Z3463"/>
<dbReference type="KEGG" id="ecs:ECs_3095"/>
<dbReference type="PATRIC" id="fig|386585.9.peg.3229"/>
<dbReference type="eggNOG" id="COG0243">
    <property type="taxonomic scope" value="Bacteria"/>
</dbReference>
<dbReference type="HOGENOM" id="CLU_000422_13_4_6"/>
<dbReference type="OMA" id="ATNEMNY"/>
<dbReference type="Proteomes" id="UP000000558">
    <property type="component" value="Chromosome"/>
</dbReference>
<dbReference type="Proteomes" id="UP000002519">
    <property type="component" value="Chromosome"/>
</dbReference>
<dbReference type="GO" id="GO:0016020">
    <property type="term" value="C:membrane"/>
    <property type="evidence" value="ECO:0007669"/>
    <property type="project" value="TreeGrafter"/>
</dbReference>
<dbReference type="GO" id="GO:0009325">
    <property type="term" value="C:nitrate reductase complex"/>
    <property type="evidence" value="ECO:0007669"/>
    <property type="project" value="TreeGrafter"/>
</dbReference>
<dbReference type="GO" id="GO:0042597">
    <property type="term" value="C:periplasmic space"/>
    <property type="evidence" value="ECO:0007669"/>
    <property type="project" value="UniProtKB-SubCell"/>
</dbReference>
<dbReference type="GO" id="GO:0051539">
    <property type="term" value="F:4 iron, 4 sulfur cluster binding"/>
    <property type="evidence" value="ECO:0007669"/>
    <property type="project" value="UniProtKB-KW"/>
</dbReference>
<dbReference type="GO" id="GO:0009055">
    <property type="term" value="F:electron transfer activity"/>
    <property type="evidence" value="ECO:0007669"/>
    <property type="project" value="UniProtKB-UniRule"/>
</dbReference>
<dbReference type="GO" id="GO:0005506">
    <property type="term" value="F:iron ion binding"/>
    <property type="evidence" value="ECO:0007669"/>
    <property type="project" value="UniProtKB-UniRule"/>
</dbReference>
<dbReference type="GO" id="GO:0030151">
    <property type="term" value="F:molybdenum ion binding"/>
    <property type="evidence" value="ECO:0007669"/>
    <property type="project" value="InterPro"/>
</dbReference>
<dbReference type="GO" id="GO:0043546">
    <property type="term" value="F:molybdopterin cofactor binding"/>
    <property type="evidence" value="ECO:0007669"/>
    <property type="project" value="InterPro"/>
</dbReference>
<dbReference type="GO" id="GO:0050140">
    <property type="term" value="F:nitrate reductase (cytochrome) activity"/>
    <property type="evidence" value="ECO:0007669"/>
    <property type="project" value="UniProtKB-EC"/>
</dbReference>
<dbReference type="GO" id="GO:0045333">
    <property type="term" value="P:cellular respiration"/>
    <property type="evidence" value="ECO:0007669"/>
    <property type="project" value="UniProtKB-ARBA"/>
</dbReference>
<dbReference type="GO" id="GO:0006777">
    <property type="term" value="P:Mo-molybdopterin cofactor biosynthetic process"/>
    <property type="evidence" value="ECO:0007669"/>
    <property type="project" value="UniProtKB-UniRule"/>
</dbReference>
<dbReference type="GO" id="GO:0042128">
    <property type="term" value="P:nitrate assimilation"/>
    <property type="evidence" value="ECO:0007669"/>
    <property type="project" value="UniProtKB-UniRule"/>
</dbReference>
<dbReference type="CDD" id="cd02791">
    <property type="entry name" value="MopB_CT_Nitrate-R-NapA-like"/>
    <property type="match status" value="1"/>
</dbReference>
<dbReference type="CDD" id="cd02754">
    <property type="entry name" value="MopB_Nitrate-R-NapA-like"/>
    <property type="match status" value="1"/>
</dbReference>
<dbReference type="FunFam" id="2.40.40.20:FF:000005">
    <property type="entry name" value="Periplasmic nitrate reductase"/>
    <property type="match status" value="1"/>
</dbReference>
<dbReference type="FunFam" id="3.40.228.10:FF:000001">
    <property type="entry name" value="Periplasmic nitrate reductase"/>
    <property type="match status" value="1"/>
</dbReference>
<dbReference type="Gene3D" id="2.40.40.20">
    <property type="match status" value="1"/>
</dbReference>
<dbReference type="Gene3D" id="3.30.200.210">
    <property type="match status" value="1"/>
</dbReference>
<dbReference type="Gene3D" id="3.40.50.740">
    <property type="match status" value="1"/>
</dbReference>
<dbReference type="Gene3D" id="3.40.228.10">
    <property type="entry name" value="Dimethylsulfoxide Reductase, domain 2"/>
    <property type="match status" value="1"/>
</dbReference>
<dbReference type="HAMAP" id="MF_01630">
    <property type="entry name" value="Nitrate_reduct_NapA"/>
    <property type="match status" value="1"/>
</dbReference>
<dbReference type="InterPro" id="IPR009010">
    <property type="entry name" value="Asp_de-COase-like_dom_sf"/>
</dbReference>
<dbReference type="InterPro" id="IPR041957">
    <property type="entry name" value="CT_Nitrate-R-NapA-like"/>
</dbReference>
<dbReference type="InterPro" id="IPR006657">
    <property type="entry name" value="MoPterin_dinucl-bd_dom"/>
</dbReference>
<dbReference type="InterPro" id="IPR006656">
    <property type="entry name" value="Mopterin_OxRdtase"/>
</dbReference>
<dbReference type="InterPro" id="IPR006963">
    <property type="entry name" value="Mopterin_OxRdtase_4Fe-4S_dom"/>
</dbReference>
<dbReference type="InterPro" id="IPR027467">
    <property type="entry name" value="MopterinOxRdtase_cofactor_BS"/>
</dbReference>
<dbReference type="InterPro" id="IPR010051">
    <property type="entry name" value="Periplasm_NO3_reductase_lsu"/>
</dbReference>
<dbReference type="InterPro" id="IPR050123">
    <property type="entry name" value="Prok_molybdopt-oxidoreductase"/>
</dbReference>
<dbReference type="InterPro" id="IPR006311">
    <property type="entry name" value="TAT_signal"/>
</dbReference>
<dbReference type="InterPro" id="IPR019546">
    <property type="entry name" value="TAT_signal_bac_arc"/>
</dbReference>
<dbReference type="NCBIfam" id="TIGR01706">
    <property type="entry name" value="NAPA"/>
    <property type="match status" value="1"/>
</dbReference>
<dbReference type="NCBIfam" id="NF010055">
    <property type="entry name" value="PRK13532.1"/>
    <property type="match status" value="1"/>
</dbReference>
<dbReference type="NCBIfam" id="TIGR01409">
    <property type="entry name" value="TAT_signal_seq"/>
    <property type="match status" value="1"/>
</dbReference>
<dbReference type="PANTHER" id="PTHR43105:SF11">
    <property type="entry name" value="PERIPLASMIC NITRATE REDUCTASE"/>
    <property type="match status" value="1"/>
</dbReference>
<dbReference type="PANTHER" id="PTHR43105">
    <property type="entry name" value="RESPIRATORY NITRATE REDUCTASE"/>
    <property type="match status" value="1"/>
</dbReference>
<dbReference type="Pfam" id="PF04879">
    <property type="entry name" value="Molybdop_Fe4S4"/>
    <property type="match status" value="1"/>
</dbReference>
<dbReference type="Pfam" id="PF00384">
    <property type="entry name" value="Molybdopterin"/>
    <property type="match status" value="1"/>
</dbReference>
<dbReference type="Pfam" id="PF01568">
    <property type="entry name" value="Molydop_binding"/>
    <property type="match status" value="1"/>
</dbReference>
<dbReference type="SMART" id="SM00926">
    <property type="entry name" value="Molybdop_Fe4S4"/>
    <property type="match status" value="1"/>
</dbReference>
<dbReference type="SUPFAM" id="SSF50692">
    <property type="entry name" value="ADC-like"/>
    <property type="match status" value="1"/>
</dbReference>
<dbReference type="SUPFAM" id="SSF53706">
    <property type="entry name" value="Formate dehydrogenase/DMSO reductase, domains 1-3"/>
    <property type="match status" value="1"/>
</dbReference>
<dbReference type="PROSITE" id="PS51669">
    <property type="entry name" value="4FE4S_MOW_BIS_MGD"/>
    <property type="match status" value="1"/>
</dbReference>
<dbReference type="PROSITE" id="PS00551">
    <property type="entry name" value="MOLYBDOPTERIN_PROK_1"/>
    <property type="match status" value="1"/>
</dbReference>
<dbReference type="PROSITE" id="PS51318">
    <property type="entry name" value="TAT"/>
    <property type="match status" value="1"/>
</dbReference>
<name>NAPA_ECO57</name>
<keyword id="KW-0004">4Fe-4S</keyword>
<keyword id="KW-0249">Electron transport</keyword>
<keyword id="KW-0408">Iron</keyword>
<keyword id="KW-0411">Iron-sulfur</keyword>
<keyword id="KW-0479">Metal-binding</keyword>
<keyword id="KW-0500">Molybdenum</keyword>
<keyword id="KW-0534">Nitrate assimilation</keyword>
<keyword id="KW-0560">Oxidoreductase</keyword>
<keyword id="KW-0574">Periplasm</keyword>
<keyword id="KW-1185">Reference proteome</keyword>
<keyword id="KW-0732">Signal</keyword>
<keyword id="KW-0813">Transport</keyword>
<evidence type="ECO:0000255" key="1">
    <source>
        <dbReference type="HAMAP-Rule" id="MF_01630"/>
    </source>
</evidence>
<sequence length="828" mass="93057">MKLSRRSFMKANAVAAAAAAAGLSVPGVARAVVGQQEAIKWDKAPCRFCGTGCGVLVGTQQGRVVACQGDPDAPVNRGLNCIKGYFLPKIMYGKDRLTQPLLRMKNGKYDKEGEFTPITWDQAFDVMEEKFKTALKEKGPESIGMFGSGQWTIWEGYAASKLFKAGFRSNNIDPNARHCMASAVVGFMRTFGMDEPMGCYDDIEQADAFVLWGANMAEMHPILWSRITNRRLSNQDVTVAVLSTYQHRSFELADNGIIFTPQSDLVILNYIANYIIQNNAINQDFFSKHVNLRKGATDIGYGLRPTHPLEKAAKNPGSDASEPMSFEDYKAFVAEYTLEKTAEMTGVPKDQLEQLAQLYADPNKKVISYWTMGFNQHTRGVWANNLVYNLHLLTGKISQPGCGPFSLTGQPSACGTAREVGTFAHRLPADMVVTNEKHRDICEKKWNIPSGTIPAKIGLHAVAQDRALKDGKLNVYWTMCTNNMQAGPNINEERMPGWRDPRNFIIVSDPYPTVSALAADLILPTAMWVEKEGAYGNAERRTQFWRQQVQAPGEAKSDLWQLVQFSRRFKTEEVWPEELLAKKPELRGKTLYEVLYATPEVSKFPVSELAEDQLNDESRELGFYLQKGLFEEYAWFGRGHGHDLAPFDDYHKARGLRWPVVNGKETQWRYSEGNDPYVKAGEGYKFYGKPDGKAVIFALPFEPAAEAPDEEYDLWLSTGRVLEHWHTGSMTRRVPELHRAFPEAVLFIHPLDAKARDLRRGDKVKVVSRRGEVISIVETRGRNRPPQGLVYMPFFDAAQLVNKLTLDATDPLSKETDFKKCAVKLEKV</sequence>
<feature type="signal peptide" description="Tat-type signal" evidence="1">
    <location>
        <begin position="1"/>
        <end position="31"/>
    </location>
</feature>
<feature type="chain" id="PRO_0000045985" description="Periplasmic nitrate reductase" evidence="1">
    <location>
        <begin position="32"/>
        <end position="828"/>
    </location>
</feature>
<feature type="domain" description="4Fe-4S Mo/W bis-MGD-type" evidence="1">
    <location>
        <begin position="39"/>
        <end position="95"/>
    </location>
</feature>
<feature type="binding site" evidence="1">
    <location>
        <position position="46"/>
    </location>
    <ligand>
        <name>[4Fe-4S] cluster</name>
        <dbReference type="ChEBI" id="CHEBI:49883"/>
    </ligand>
</feature>
<feature type="binding site" evidence="1">
    <location>
        <position position="49"/>
    </location>
    <ligand>
        <name>[4Fe-4S] cluster</name>
        <dbReference type="ChEBI" id="CHEBI:49883"/>
    </ligand>
</feature>
<feature type="binding site" evidence="1">
    <location>
        <position position="53"/>
    </location>
    <ligand>
        <name>[4Fe-4S] cluster</name>
        <dbReference type="ChEBI" id="CHEBI:49883"/>
    </ligand>
</feature>
<feature type="binding site" evidence="1">
    <location>
        <position position="81"/>
    </location>
    <ligand>
        <name>[4Fe-4S] cluster</name>
        <dbReference type="ChEBI" id="CHEBI:49883"/>
    </ligand>
</feature>
<feature type="binding site" evidence="1">
    <location>
        <position position="83"/>
    </location>
    <ligand>
        <name>Mo-bis(molybdopterin guanine dinucleotide)</name>
        <dbReference type="ChEBI" id="CHEBI:60539"/>
    </ligand>
</feature>
<feature type="binding site" evidence="1">
    <location>
        <position position="150"/>
    </location>
    <ligand>
        <name>Mo-bis(molybdopterin guanine dinucleotide)</name>
        <dbReference type="ChEBI" id="CHEBI:60539"/>
    </ligand>
</feature>
<feature type="binding site" evidence="1">
    <location>
        <position position="175"/>
    </location>
    <ligand>
        <name>Mo-bis(molybdopterin guanine dinucleotide)</name>
        <dbReference type="ChEBI" id="CHEBI:60539"/>
    </ligand>
</feature>
<feature type="binding site" evidence="1">
    <location>
        <position position="179"/>
    </location>
    <ligand>
        <name>Mo-bis(molybdopterin guanine dinucleotide)</name>
        <dbReference type="ChEBI" id="CHEBI:60539"/>
    </ligand>
</feature>
<feature type="binding site" evidence="1">
    <location>
        <begin position="212"/>
        <end position="219"/>
    </location>
    <ligand>
        <name>Mo-bis(molybdopterin guanine dinucleotide)</name>
        <dbReference type="ChEBI" id="CHEBI:60539"/>
    </ligand>
</feature>
<feature type="binding site" evidence="1">
    <location>
        <begin position="243"/>
        <end position="247"/>
    </location>
    <ligand>
        <name>Mo-bis(molybdopterin guanine dinucleotide)</name>
        <dbReference type="ChEBI" id="CHEBI:60539"/>
    </ligand>
</feature>
<feature type="binding site" evidence="1">
    <location>
        <begin position="262"/>
        <end position="264"/>
    </location>
    <ligand>
        <name>Mo-bis(molybdopterin guanine dinucleotide)</name>
        <dbReference type="ChEBI" id="CHEBI:60539"/>
    </ligand>
</feature>
<feature type="binding site" evidence="1">
    <location>
        <position position="372"/>
    </location>
    <ligand>
        <name>Mo-bis(molybdopterin guanine dinucleotide)</name>
        <dbReference type="ChEBI" id="CHEBI:60539"/>
    </ligand>
</feature>
<feature type="binding site" evidence="1">
    <location>
        <position position="376"/>
    </location>
    <ligand>
        <name>Mo-bis(molybdopterin guanine dinucleotide)</name>
        <dbReference type="ChEBI" id="CHEBI:60539"/>
    </ligand>
</feature>
<feature type="binding site" evidence="1">
    <location>
        <position position="482"/>
    </location>
    <ligand>
        <name>Mo-bis(molybdopterin guanine dinucleotide)</name>
        <dbReference type="ChEBI" id="CHEBI:60539"/>
    </ligand>
</feature>
<feature type="binding site" evidence="1">
    <location>
        <begin position="508"/>
        <end position="509"/>
    </location>
    <ligand>
        <name>Mo-bis(molybdopterin guanine dinucleotide)</name>
        <dbReference type="ChEBI" id="CHEBI:60539"/>
    </ligand>
</feature>
<feature type="binding site" evidence="1">
    <location>
        <position position="531"/>
    </location>
    <ligand>
        <name>Mo-bis(molybdopterin guanine dinucleotide)</name>
        <dbReference type="ChEBI" id="CHEBI:60539"/>
    </ligand>
</feature>
<feature type="binding site" evidence="1">
    <location>
        <position position="558"/>
    </location>
    <ligand>
        <name>Mo-bis(molybdopterin guanine dinucleotide)</name>
        <dbReference type="ChEBI" id="CHEBI:60539"/>
    </ligand>
</feature>
<feature type="binding site" evidence="1">
    <location>
        <begin position="718"/>
        <end position="727"/>
    </location>
    <ligand>
        <name>Mo-bis(molybdopterin guanine dinucleotide)</name>
        <dbReference type="ChEBI" id="CHEBI:60539"/>
    </ligand>
</feature>
<feature type="binding site" evidence="1">
    <location>
        <position position="794"/>
    </location>
    <ligand>
        <name>substrate</name>
    </ligand>
</feature>
<feature type="binding site" evidence="1">
    <location>
        <position position="802"/>
    </location>
    <ligand>
        <name>Mo-bis(molybdopterin guanine dinucleotide)</name>
        <dbReference type="ChEBI" id="CHEBI:60539"/>
    </ligand>
</feature>
<feature type="binding site" evidence="1">
    <location>
        <position position="819"/>
    </location>
    <ligand>
        <name>Mo-bis(molybdopterin guanine dinucleotide)</name>
        <dbReference type="ChEBI" id="CHEBI:60539"/>
    </ligand>
</feature>
<organism>
    <name type="scientific">Escherichia coli O157:H7</name>
    <dbReference type="NCBI Taxonomy" id="83334"/>
    <lineage>
        <taxon>Bacteria</taxon>
        <taxon>Pseudomonadati</taxon>
        <taxon>Pseudomonadota</taxon>
        <taxon>Gammaproteobacteria</taxon>
        <taxon>Enterobacterales</taxon>
        <taxon>Enterobacteriaceae</taxon>
        <taxon>Escherichia</taxon>
    </lineage>
</organism>
<gene>
    <name evidence="1" type="primary">napA</name>
    <name type="ordered locus">Z3463</name>
    <name type="ordered locus">ECs3095</name>
</gene>
<reference key="1">
    <citation type="journal article" date="2001" name="Nature">
        <title>Genome sequence of enterohaemorrhagic Escherichia coli O157:H7.</title>
        <authorList>
            <person name="Perna N.T."/>
            <person name="Plunkett G. III"/>
            <person name="Burland V."/>
            <person name="Mau B."/>
            <person name="Glasner J.D."/>
            <person name="Rose D.J."/>
            <person name="Mayhew G.F."/>
            <person name="Evans P.S."/>
            <person name="Gregor J."/>
            <person name="Kirkpatrick H.A."/>
            <person name="Posfai G."/>
            <person name="Hackett J."/>
            <person name="Klink S."/>
            <person name="Boutin A."/>
            <person name="Shao Y."/>
            <person name="Miller L."/>
            <person name="Grotbeck E.J."/>
            <person name="Davis N.W."/>
            <person name="Lim A."/>
            <person name="Dimalanta E.T."/>
            <person name="Potamousis K."/>
            <person name="Apodaca J."/>
            <person name="Anantharaman T.S."/>
            <person name="Lin J."/>
            <person name="Yen G."/>
            <person name="Schwartz D.C."/>
            <person name="Welch R.A."/>
            <person name="Blattner F.R."/>
        </authorList>
    </citation>
    <scope>NUCLEOTIDE SEQUENCE [LARGE SCALE GENOMIC DNA]</scope>
    <source>
        <strain>O157:H7 / EDL933 / ATCC 700927 / EHEC</strain>
    </source>
</reference>
<reference key="2">
    <citation type="journal article" date="2001" name="DNA Res.">
        <title>Complete genome sequence of enterohemorrhagic Escherichia coli O157:H7 and genomic comparison with a laboratory strain K-12.</title>
        <authorList>
            <person name="Hayashi T."/>
            <person name="Makino K."/>
            <person name="Ohnishi M."/>
            <person name="Kurokawa K."/>
            <person name="Ishii K."/>
            <person name="Yokoyama K."/>
            <person name="Han C.-G."/>
            <person name="Ohtsubo E."/>
            <person name="Nakayama K."/>
            <person name="Murata T."/>
            <person name="Tanaka M."/>
            <person name="Tobe T."/>
            <person name="Iida T."/>
            <person name="Takami H."/>
            <person name="Honda T."/>
            <person name="Sasakawa C."/>
            <person name="Ogasawara N."/>
            <person name="Yasunaga T."/>
            <person name="Kuhara S."/>
            <person name="Shiba T."/>
            <person name="Hattori M."/>
            <person name="Shinagawa H."/>
        </authorList>
    </citation>
    <scope>NUCLEOTIDE SEQUENCE [LARGE SCALE GENOMIC DNA]</scope>
    <source>
        <strain>O157:H7 / Sakai / RIMD 0509952 / EHEC</strain>
    </source>
</reference>
<protein>
    <recommendedName>
        <fullName evidence="1">Periplasmic nitrate reductase</fullName>
        <ecNumber evidence="1">1.9.6.1</ecNumber>
    </recommendedName>
</protein>
<comment type="function">
    <text evidence="1">Catalytic subunit of the periplasmic nitrate reductase complex NapAB. Receives electrons from NapB and catalyzes the reduction of nitrate to nitrite.</text>
</comment>
<comment type="catalytic activity">
    <reaction evidence="1">
        <text>2 Fe(II)-[cytochrome] + nitrate + 2 H(+) = 2 Fe(III)-[cytochrome] + nitrite + H2O</text>
        <dbReference type="Rhea" id="RHEA:12909"/>
        <dbReference type="Rhea" id="RHEA-COMP:11777"/>
        <dbReference type="Rhea" id="RHEA-COMP:11778"/>
        <dbReference type="ChEBI" id="CHEBI:15377"/>
        <dbReference type="ChEBI" id="CHEBI:15378"/>
        <dbReference type="ChEBI" id="CHEBI:16301"/>
        <dbReference type="ChEBI" id="CHEBI:17632"/>
        <dbReference type="ChEBI" id="CHEBI:29033"/>
        <dbReference type="ChEBI" id="CHEBI:29034"/>
        <dbReference type="EC" id="1.9.6.1"/>
    </reaction>
</comment>
<comment type="cofactor">
    <cofactor evidence="1">
        <name>[4Fe-4S] cluster</name>
        <dbReference type="ChEBI" id="CHEBI:49883"/>
    </cofactor>
    <text evidence="1">Binds 1 [4Fe-4S] cluster.</text>
</comment>
<comment type="cofactor">
    <cofactor evidence="1">
        <name>Mo-bis(molybdopterin guanine dinucleotide)</name>
        <dbReference type="ChEBI" id="CHEBI:60539"/>
    </cofactor>
    <text evidence="1">Binds 1 molybdenum-bis(molybdopterin guanine dinucleotide) (Mo-bis-MGD) cofactor per subunit.</text>
</comment>
<comment type="subunit">
    <text evidence="1">Component of the periplasmic nitrate reductase NapAB complex composed of NapA and NapB.</text>
</comment>
<comment type="subcellular location">
    <subcellularLocation>
        <location evidence="1">Periplasm</location>
    </subcellularLocation>
</comment>
<comment type="PTM">
    <text evidence="1">Predicted to be exported by the Tat system. The position of the signal peptide cleavage has not been experimentally proven.</text>
</comment>
<comment type="similarity">
    <text evidence="1">Belongs to the prokaryotic molybdopterin-containing oxidoreductase family. NasA/NapA/NarB subfamily.</text>
</comment>
<proteinExistence type="inferred from homology"/>
<accession>Q8XE47</accession>
<accession>Q7AC56</accession>